<feature type="chain" id="PRO_0000234312" description="L-threonine dehydratase biosynthetic IlvA">
    <location>
        <begin position="1"/>
        <end position="422"/>
    </location>
</feature>
<feature type="domain" description="ACT-like" evidence="2">
    <location>
        <begin position="339"/>
        <end position="413"/>
    </location>
</feature>
<feature type="binding site" evidence="1">
    <location>
        <position position="83"/>
    </location>
    <ligand>
        <name>pyridoxal 5'-phosphate</name>
        <dbReference type="ChEBI" id="CHEBI:597326"/>
    </ligand>
</feature>
<feature type="binding site" evidence="1">
    <location>
        <begin position="189"/>
        <end position="193"/>
    </location>
    <ligand>
        <name>pyridoxal 5'-phosphate</name>
        <dbReference type="ChEBI" id="CHEBI:597326"/>
    </ligand>
</feature>
<feature type="binding site" evidence="1">
    <location>
        <position position="315"/>
    </location>
    <ligand>
        <name>pyridoxal 5'-phosphate</name>
        <dbReference type="ChEBI" id="CHEBI:597326"/>
    </ligand>
</feature>
<feature type="modified residue" description="N6-(pyridoxal phosphate)lysine" evidence="1">
    <location>
        <position position="56"/>
    </location>
</feature>
<keyword id="KW-0028">Amino-acid biosynthesis</keyword>
<keyword id="KW-0100">Branched-chain amino acid biosynthesis</keyword>
<keyword id="KW-0412">Isoleucine biosynthesis</keyword>
<keyword id="KW-0456">Lyase</keyword>
<keyword id="KW-0663">Pyridoxal phosphate</keyword>
<keyword id="KW-1185">Reference proteome</keyword>
<sequence>MTVRTKVSTKDIDEAYLRLKNIVKETPLQFDHYLSQKYNCNVYLKREDLQWVRSFKLRGAYNAISVLSNEEKNKGITCASAGNHAQGVAYTAKKLNLKAVIFMPVTTPRQKINQVKFFGDSNVEIVLIGDTFDHCLAQALNYTKQHKMNFIDPFNNVYTIAGQGTLAKEILNQAEKEDKTFDYVFAAIGGGGLISGVSTYFKAHSPHTKIIGVEPTGASSMYQSVVINHSIVTLENIDKFVDGASVARVGDITFDIAKDKVDDYVQVDEGAVCSTILDMYSKQAIVAEPAGALSVSALEQYKKQIENKTIVCIVSGGNNDINRMKEIEERSLLFEEMKHYFILNFPQRPGALREFVNDVLGPQDDITKFEYLKKTSQNTGTVIIGIQLKHHDDLIQLKDRVCQFDPSNIYINENKMLYSLLI</sequence>
<reference key="1">
    <citation type="journal article" date="2005" name="J. Bacteriol.">
        <title>Insights on evolution of virulence and resistance from the complete genome analysis of an early methicillin-resistant Staphylococcus aureus strain and a biofilm-producing methicillin-resistant Staphylococcus epidermidis strain.</title>
        <authorList>
            <person name="Gill S.R."/>
            <person name="Fouts D.E."/>
            <person name="Archer G.L."/>
            <person name="Mongodin E.F."/>
            <person name="DeBoy R.T."/>
            <person name="Ravel J."/>
            <person name="Paulsen I.T."/>
            <person name="Kolonay J.F."/>
            <person name="Brinkac L.M."/>
            <person name="Beanan M.J."/>
            <person name="Dodson R.J."/>
            <person name="Daugherty S.C."/>
            <person name="Madupu R."/>
            <person name="Angiuoli S.V."/>
            <person name="Durkin A.S."/>
            <person name="Haft D.H."/>
            <person name="Vamathevan J.J."/>
            <person name="Khouri H."/>
            <person name="Utterback T.R."/>
            <person name="Lee C."/>
            <person name="Dimitrov G."/>
            <person name="Jiang L."/>
            <person name="Qin H."/>
            <person name="Weidman J."/>
            <person name="Tran K."/>
            <person name="Kang K.H."/>
            <person name="Hance I.R."/>
            <person name="Nelson K.E."/>
            <person name="Fraser C.M."/>
        </authorList>
    </citation>
    <scope>NUCLEOTIDE SEQUENCE [LARGE SCALE GENOMIC DNA]</scope>
    <source>
        <strain>ATCC 35984 / DSM 28319 / BCRC 17069 / CCUG 31568 / BM 3577 / RP62A</strain>
    </source>
</reference>
<proteinExistence type="inferred from homology"/>
<dbReference type="EC" id="4.3.1.19"/>
<dbReference type="EMBL" id="CP000029">
    <property type="protein sequence ID" value="AAW55020.1"/>
    <property type="molecule type" value="Genomic_DNA"/>
</dbReference>
<dbReference type="RefSeq" id="WP_001830018.1">
    <property type="nucleotide sequence ID" value="NC_002976.3"/>
</dbReference>
<dbReference type="SMR" id="Q5HMF5"/>
<dbReference type="STRING" id="176279.SERP1673"/>
<dbReference type="GeneID" id="50018239"/>
<dbReference type="KEGG" id="ser:SERP1673"/>
<dbReference type="eggNOG" id="COG1171">
    <property type="taxonomic scope" value="Bacteria"/>
</dbReference>
<dbReference type="HOGENOM" id="CLU_021152_4_2_9"/>
<dbReference type="UniPathway" id="UPA00047">
    <property type="reaction ID" value="UER00054"/>
</dbReference>
<dbReference type="Proteomes" id="UP000000531">
    <property type="component" value="Chromosome"/>
</dbReference>
<dbReference type="GO" id="GO:0003941">
    <property type="term" value="F:L-serine ammonia-lyase activity"/>
    <property type="evidence" value="ECO:0007669"/>
    <property type="project" value="TreeGrafter"/>
</dbReference>
<dbReference type="GO" id="GO:0030170">
    <property type="term" value="F:pyridoxal phosphate binding"/>
    <property type="evidence" value="ECO:0007669"/>
    <property type="project" value="InterPro"/>
</dbReference>
<dbReference type="GO" id="GO:0004794">
    <property type="term" value="F:threonine deaminase activity"/>
    <property type="evidence" value="ECO:0007669"/>
    <property type="project" value="UniProtKB-EC"/>
</dbReference>
<dbReference type="GO" id="GO:0009097">
    <property type="term" value="P:isoleucine biosynthetic process"/>
    <property type="evidence" value="ECO:0007669"/>
    <property type="project" value="UniProtKB-UniPathway"/>
</dbReference>
<dbReference type="GO" id="GO:0006565">
    <property type="term" value="P:L-serine catabolic process"/>
    <property type="evidence" value="ECO:0007669"/>
    <property type="project" value="TreeGrafter"/>
</dbReference>
<dbReference type="GO" id="GO:0006567">
    <property type="term" value="P:threonine catabolic process"/>
    <property type="evidence" value="ECO:0007669"/>
    <property type="project" value="TreeGrafter"/>
</dbReference>
<dbReference type="GO" id="GO:0006566">
    <property type="term" value="P:threonine metabolic process"/>
    <property type="evidence" value="ECO:0000250"/>
    <property type="project" value="UniProtKB"/>
</dbReference>
<dbReference type="CDD" id="cd04907">
    <property type="entry name" value="ACT_ThrD-I_2"/>
    <property type="match status" value="1"/>
</dbReference>
<dbReference type="CDD" id="cd01562">
    <property type="entry name" value="Thr-dehyd"/>
    <property type="match status" value="1"/>
</dbReference>
<dbReference type="FunFam" id="3.40.50.1100:FF:000007">
    <property type="entry name" value="L-threonine dehydratase catabolic TdcB"/>
    <property type="match status" value="1"/>
</dbReference>
<dbReference type="Gene3D" id="3.40.50.1100">
    <property type="match status" value="2"/>
</dbReference>
<dbReference type="InterPro" id="IPR045865">
    <property type="entry name" value="ACT-like_dom_sf"/>
</dbReference>
<dbReference type="InterPro" id="IPR011820">
    <property type="entry name" value="IlvA"/>
</dbReference>
<dbReference type="InterPro" id="IPR050147">
    <property type="entry name" value="Ser/Thr_Dehydratase"/>
</dbReference>
<dbReference type="InterPro" id="IPR000634">
    <property type="entry name" value="Ser/Thr_deHydtase_PyrdxlP-BS"/>
</dbReference>
<dbReference type="InterPro" id="IPR001721">
    <property type="entry name" value="TD_ACT-like"/>
</dbReference>
<dbReference type="InterPro" id="IPR001926">
    <property type="entry name" value="TrpB-like_PALP"/>
</dbReference>
<dbReference type="InterPro" id="IPR036052">
    <property type="entry name" value="TrpB-like_PALP_sf"/>
</dbReference>
<dbReference type="NCBIfam" id="NF006390">
    <property type="entry name" value="PRK08639.1"/>
    <property type="match status" value="1"/>
</dbReference>
<dbReference type="NCBIfam" id="TIGR02079">
    <property type="entry name" value="THD1"/>
    <property type="match status" value="1"/>
</dbReference>
<dbReference type="PANTHER" id="PTHR48078:SF11">
    <property type="entry name" value="THREONINE DEHYDRATASE, MITOCHONDRIAL"/>
    <property type="match status" value="1"/>
</dbReference>
<dbReference type="PANTHER" id="PTHR48078">
    <property type="entry name" value="THREONINE DEHYDRATASE, MITOCHONDRIAL-RELATED"/>
    <property type="match status" value="1"/>
</dbReference>
<dbReference type="Pfam" id="PF00291">
    <property type="entry name" value="PALP"/>
    <property type="match status" value="1"/>
</dbReference>
<dbReference type="Pfam" id="PF00585">
    <property type="entry name" value="Thr_dehydrat_C"/>
    <property type="match status" value="1"/>
</dbReference>
<dbReference type="SUPFAM" id="SSF55021">
    <property type="entry name" value="ACT-like"/>
    <property type="match status" value="1"/>
</dbReference>
<dbReference type="SUPFAM" id="SSF53686">
    <property type="entry name" value="Tryptophan synthase beta subunit-like PLP-dependent enzymes"/>
    <property type="match status" value="1"/>
</dbReference>
<dbReference type="PROSITE" id="PS51672">
    <property type="entry name" value="ACT_LIKE"/>
    <property type="match status" value="1"/>
</dbReference>
<dbReference type="PROSITE" id="PS00165">
    <property type="entry name" value="DEHYDRATASE_SER_THR"/>
    <property type="match status" value="1"/>
</dbReference>
<evidence type="ECO:0000250" key="1"/>
<evidence type="ECO:0000255" key="2">
    <source>
        <dbReference type="PROSITE-ProRule" id="PRU01008"/>
    </source>
</evidence>
<evidence type="ECO:0000305" key="3"/>
<name>ILVA_STAEQ</name>
<accession>Q5HMF5</accession>
<protein>
    <recommendedName>
        <fullName>L-threonine dehydratase biosynthetic IlvA</fullName>
        <ecNumber>4.3.1.19</ecNumber>
    </recommendedName>
    <alternativeName>
        <fullName>Threonine deaminase</fullName>
    </alternativeName>
</protein>
<comment type="function">
    <text evidence="1">Catalyzes the anaerobic formation of alpha-ketobutyrate and ammonia from threonine in a two-step reaction. The first step involved a dehydration of threonine and a production of enamine intermediates (aminocrotonate), which tautomerizes to its imine form (iminobutyrate). Both intermediates are unstable and short-lived. The second step is the nonenzymatic hydrolysis of the enamine/imine intermediates to form 2-ketobutyrate and free ammonia. In the low water environment of the cell, the second step is accelerated by RidA (By similarity).</text>
</comment>
<comment type="catalytic activity">
    <reaction>
        <text>L-threonine = 2-oxobutanoate + NH4(+)</text>
        <dbReference type="Rhea" id="RHEA:22108"/>
        <dbReference type="ChEBI" id="CHEBI:16763"/>
        <dbReference type="ChEBI" id="CHEBI:28938"/>
        <dbReference type="ChEBI" id="CHEBI:57926"/>
        <dbReference type="EC" id="4.3.1.19"/>
    </reaction>
</comment>
<comment type="cofactor">
    <cofactor evidence="1">
        <name>pyridoxal 5'-phosphate</name>
        <dbReference type="ChEBI" id="CHEBI:597326"/>
    </cofactor>
</comment>
<comment type="pathway">
    <text>Amino-acid biosynthesis; L-isoleucine biosynthesis; 2-oxobutanoate from L-threonine: step 1/1.</text>
</comment>
<comment type="subunit">
    <text evidence="1">Homotetramer.</text>
</comment>
<comment type="similarity">
    <text evidence="3">Belongs to the serine/threonine dehydratase family.</text>
</comment>
<organism>
    <name type="scientific">Staphylococcus epidermidis (strain ATCC 35984 / DSM 28319 / BCRC 17069 / CCUG 31568 / BM 3577 / RP62A)</name>
    <dbReference type="NCBI Taxonomy" id="176279"/>
    <lineage>
        <taxon>Bacteria</taxon>
        <taxon>Bacillati</taxon>
        <taxon>Bacillota</taxon>
        <taxon>Bacilli</taxon>
        <taxon>Bacillales</taxon>
        <taxon>Staphylococcaceae</taxon>
        <taxon>Staphylococcus</taxon>
    </lineage>
</organism>
<gene>
    <name type="primary">ilvA</name>
    <name type="ordered locus">SERP1673</name>
</gene>